<evidence type="ECO:0000250" key="1">
    <source>
        <dbReference type="UniProtKB" id="Q9C0D3"/>
    </source>
</evidence>
<evidence type="ECO:0000305" key="2"/>
<keyword id="KW-0433">Leucine-rich repeat</keyword>
<keyword id="KW-1185">Reference proteome</keyword>
<keyword id="KW-0677">Repeat</keyword>
<keyword id="KW-0833">Ubl conjugation pathway</keyword>
<organism>
    <name type="scientific">Xenopus laevis</name>
    <name type="common">African clawed frog</name>
    <dbReference type="NCBI Taxonomy" id="8355"/>
    <lineage>
        <taxon>Eukaryota</taxon>
        <taxon>Metazoa</taxon>
        <taxon>Chordata</taxon>
        <taxon>Craniata</taxon>
        <taxon>Vertebrata</taxon>
        <taxon>Euteleostomi</taxon>
        <taxon>Amphibia</taxon>
        <taxon>Batrachia</taxon>
        <taxon>Anura</taxon>
        <taxon>Pipoidea</taxon>
        <taxon>Pipidae</taxon>
        <taxon>Xenopodinae</taxon>
        <taxon>Xenopus</taxon>
        <taxon>Xenopus</taxon>
    </lineage>
</organism>
<sequence>MEESSPKSLLDITLLYLSTHLEKFCWERQDGTYCLQDAAIFPQEVADRLLQAMAVQRQLNEVTVGIFRGNQLRLKRACIRKAKISAVAFRKAFCHHKLIELDATGVNADITITDIISGLSSSKWIRENLQCLVLNSLTLSLEDPYERCFSQLSGLRVLSITNVLFYNEDLADVASLPRLESLDISNTSVTDITALVACKDILKSLTMHHLKCLKMTTTQILEVIRELKKLNHLDMSDDKQFTSDIACRLLEQNDILLHLVSLDISGRKHVTDKAVEAFIRHRPQMQFVGLLATEAGYSEFLSGEGCVKVSGEANQTQIAEALRRYSERSFFVREALFHLFSLTHVMDKANPEMLKLVVIGMRNHPTNLPVQLAASACVFNLTKQDLAAGMPVKLLADVTHLLLEAMKHFPNHQQLQKNCLLSLCSDRILQDVPFNRFDAAKLVMQWLCNHEDQNMQRMAVAIISILAAKLSTEQTAQLGAELFIVRQLLQIVRQKTSQNMVDTTLKFTLSALWNLTDESPTTCRHFIENQGLELFMKVLETFPSESSIQQKVLGLLNNIAEVKELHTELMCKDFIDQISKLLHSVEVEVSYFAAGIIAHLVSRGEETWTLSSSMRETLLEQLHSAILSWPTPECEMVAYRSFNPFFPLLACFRTPGVQLWAVWAMQHVCSKNPVRYCSMLIEEGGLVRLHRIRDHMCADPDVLRITITILDNLDRHLKKHGNPPCQKPPFTK</sequence>
<gene>
    <name type="primary">zyg-11</name>
</gene>
<dbReference type="EMBL" id="BC126059">
    <property type="protein sequence ID" value="AAI26060.1"/>
    <property type="molecule type" value="mRNA"/>
</dbReference>
<dbReference type="RefSeq" id="NP_001090447.1">
    <property type="nucleotide sequence ID" value="NM_001096978.1"/>
</dbReference>
<dbReference type="SMR" id="A0JMZ3"/>
<dbReference type="GeneID" id="779359"/>
<dbReference type="KEGG" id="xla:779359"/>
<dbReference type="AGR" id="Xenbase:XB-GENE-5829609"/>
<dbReference type="CTD" id="779359"/>
<dbReference type="Xenbase" id="XB-GENE-5829609">
    <property type="gene designation" value="zyg11b.L"/>
</dbReference>
<dbReference type="OrthoDB" id="120976at2759"/>
<dbReference type="Proteomes" id="UP000186698">
    <property type="component" value="Chromosome 4L"/>
</dbReference>
<dbReference type="Bgee" id="779359">
    <property type="expression patterns" value="Expressed in blastula and 18 other cell types or tissues"/>
</dbReference>
<dbReference type="GO" id="GO:0031462">
    <property type="term" value="C:Cul2-RING ubiquitin ligase complex"/>
    <property type="evidence" value="ECO:0000318"/>
    <property type="project" value="GO_Central"/>
</dbReference>
<dbReference type="FunFam" id="3.80.10.10:FF:001025">
    <property type="entry name" value="Protein zyg-11 homolog A"/>
    <property type="match status" value="1"/>
</dbReference>
<dbReference type="FunFam" id="1.25.10.10:FF:000086">
    <property type="entry name" value="protein zyg-11 homolog B isoform X2"/>
    <property type="match status" value="1"/>
</dbReference>
<dbReference type="Gene3D" id="1.25.10.10">
    <property type="entry name" value="Leucine-rich Repeat Variant"/>
    <property type="match status" value="1"/>
</dbReference>
<dbReference type="Gene3D" id="3.80.10.10">
    <property type="entry name" value="Ribonuclease Inhibitor"/>
    <property type="match status" value="1"/>
</dbReference>
<dbReference type="InterPro" id="IPR011989">
    <property type="entry name" value="ARM-like"/>
</dbReference>
<dbReference type="InterPro" id="IPR016024">
    <property type="entry name" value="ARM-type_fold"/>
</dbReference>
<dbReference type="InterPro" id="IPR032675">
    <property type="entry name" value="LRR_dom_sf"/>
</dbReference>
<dbReference type="InterPro" id="IPR055142">
    <property type="entry name" value="ZER1-like_C"/>
</dbReference>
<dbReference type="InterPro" id="IPR051341">
    <property type="entry name" value="Zyg-11_UBL_adapter"/>
</dbReference>
<dbReference type="PANTHER" id="PTHR12904">
    <property type="match status" value="1"/>
</dbReference>
<dbReference type="PANTHER" id="PTHR12904:SF22">
    <property type="entry name" value="ZYG-11 FAMILY MEMBER B, CELL CYCLE REGULATOR"/>
    <property type="match status" value="1"/>
</dbReference>
<dbReference type="Pfam" id="PF22964">
    <property type="entry name" value="ZER1-like_2nd"/>
    <property type="match status" value="1"/>
</dbReference>
<dbReference type="SUPFAM" id="SSF48371">
    <property type="entry name" value="ARM repeat"/>
    <property type="match status" value="1"/>
</dbReference>
<dbReference type="SUPFAM" id="SSF52047">
    <property type="entry name" value="RNI-like"/>
    <property type="match status" value="1"/>
</dbReference>
<reference key="1">
    <citation type="submission" date="2006-10" db="EMBL/GenBank/DDBJ databases">
        <authorList>
            <consortium name="NIH - Xenopus Gene Collection (XGC) project"/>
        </authorList>
    </citation>
    <scope>NUCLEOTIDE SEQUENCE [LARGE SCALE MRNA]</scope>
    <source>
        <tissue>Oocyte</tissue>
    </source>
</reference>
<feature type="chain" id="PRO_0000305090" description="Protein zyg-11 homolog">
    <location>
        <begin position="1"/>
        <end position="732"/>
    </location>
</feature>
<feature type="repeat" description="LRR 1">
    <location>
        <begin position="128"/>
        <end position="149"/>
    </location>
</feature>
<feature type="repeat" description="LRR 2">
    <location>
        <begin position="154"/>
        <end position="177"/>
    </location>
</feature>
<feature type="repeat" description="LRR 3">
    <location>
        <begin position="178"/>
        <end position="199"/>
    </location>
</feature>
<feature type="repeat" description="LRR 4">
    <location>
        <begin position="209"/>
        <end position="231"/>
    </location>
</feature>
<comment type="function">
    <text evidence="1">Serves as substrate adapter subunit in an E3 ubiquitin ligase complex zyg11-cul2-elongin BC. Targets substrates bearing N-terminal glycine degrons for proteasomal degradation.</text>
</comment>
<comment type="similarity">
    <text evidence="2">Belongs to the zyg-11 family.</text>
</comment>
<protein>
    <recommendedName>
        <fullName>Protein zyg-11 homolog</fullName>
    </recommendedName>
</protein>
<proteinExistence type="evidence at transcript level"/>
<accession>A0JMZ3</accession>
<name>ZYG11_XENLA</name>